<reference key="1">
    <citation type="journal article" date="2009" name="J. Bacteriol.">
        <title>Complete and draft genome sequences of six members of the Aquificales.</title>
        <authorList>
            <person name="Reysenbach A.-L."/>
            <person name="Hamamura N."/>
            <person name="Podar M."/>
            <person name="Griffiths E."/>
            <person name="Ferreira S."/>
            <person name="Hochstein R."/>
            <person name="Heidelberg J."/>
            <person name="Johnson J."/>
            <person name="Mead D."/>
            <person name="Pohorille A."/>
            <person name="Sarmiento M."/>
            <person name="Schweighofer K."/>
            <person name="Seshadri R."/>
            <person name="Voytek M.A."/>
        </authorList>
    </citation>
    <scope>NUCLEOTIDE SEQUENCE [LARGE SCALE GENOMIC DNA]</scope>
    <source>
        <strain>YO3AOP1</strain>
    </source>
</reference>
<protein>
    <recommendedName>
        <fullName evidence="1">Large ribosomal subunit protein bL32</fullName>
    </recommendedName>
    <alternativeName>
        <fullName evidence="2">50S ribosomal protein L32</fullName>
    </alternativeName>
</protein>
<dbReference type="EMBL" id="CP001080">
    <property type="protein sequence ID" value="ACD66458.1"/>
    <property type="molecule type" value="Genomic_DNA"/>
</dbReference>
<dbReference type="RefSeq" id="WP_012459533.1">
    <property type="nucleotide sequence ID" value="NC_010730.1"/>
</dbReference>
<dbReference type="SMR" id="B2V935"/>
<dbReference type="STRING" id="436114.SYO3AOP1_0825"/>
<dbReference type="KEGG" id="sul:SYO3AOP1_0825"/>
<dbReference type="eggNOG" id="COG0333">
    <property type="taxonomic scope" value="Bacteria"/>
</dbReference>
<dbReference type="HOGENOM" id="CLU_129084_1_3_0"/>
<dbReference type="GO" id="GO:0015934">
    <property type="term" value="C:large ribosomal subunit"/>
    <property type="evidence" value="ECO:0007669"/>
    <property type="project" value="InterPro"/>
</dbReference>
<dbReference type="GO" id="GO:0003735">
    <property type="term" value="F:structural constituent of ribosome"/>
    <property type="evidence" value="ECO:0007669"/>
    <property type="project" value="InterPro"/>
</dbReference>
<dbReference type="GO" id="GO:0006412">
    <property type="term" value="P:translation"/>
    <property type="evidence" value="ECO:0007669"/>
    <property type="project" value="UniProtKB-UniRule"/>
</dbReference>
<dbReference type="HAMAP" id="MF_00340">
    <property type="entry name" value="Ribosomal_bL32"/>
    <property type="match status" value="1"/>
</dbReference>
<dbReference type="InterPro" id="IPR002677">
    <property type="entry name" value="Ribosomal_bL32"/>
</dbReference>
<dbReference type="InterPro" id="IPR044957">
    <property type="entry name" value="Ribosomal_bL32_bact"/>
</dbReference>
<dbReference type="InterPro" id="IPR011332">
    <property type="entry name" value="Ribosomal_zn-bd"/>
</dbReference>
<dbReference type="NCBIfam" id="TIGR01031">
    <property type="entry name" value="rpmF_bact"/>
    <property type="match status" value="1"/>
</dbReference>
<dbReference type="PANTHER" id="PTHR35534">
    <property type="entry name" value="50S RIBOSOMAL PROTEIN L32"/>
    <property type="match status" value="1"/>
</dbReference>
<dbReference type="PANTHER" id="PTHR35534:SF1">
    <property type="entry name" value="LARGE RIBOSOMAL SUBUNIT PROTEIN BL32"/>
    <property type="match status" value="1"/>
</dbReference>
<dbReference type="Pfam" id="PF01783">
    <property type="entry name" value="Ribosomal_L32p"/>
    <property type="match status" value="1"/>
</dbReference>
<dbReference type="SUPFAM" id="SSF57829">
    <property type="entry name" value="Zn-binding ribosomal proteins"/>
    <property type="match status" value="1"/>
</dbReference>
<accession>B2V935</accession>
<comment type="similarity">
    <text evidence="1">Belongs to the bacterial ribosomal protein bL32 family.</text>
</comment>
<gene>
    <name evidence="1" type="primary">rpmF</name>
    <name type="ordered locus">SYO3AOP1_0825</name>
</gene>
<proteinExistence type="inferred from homology"/>
<name>RL32_SULSY</name>
<sequence length="58" mass="6575">MAVPKRKKSKAKTAMRRAQWKLKMPGLSICPECGQPKAPHRVCSNCGYYKNKEVIEVV</sequence>
<keyword id="KW-0687">Ribonucleoprotein</keyword>
<keyword id="KW-0689">Ribosomal protein</keyword>
<feature type="chain" id="PRO_1000120182" description="Large ribosomal subunit protein bL32">
    <location>
        <begin position="1"/>
        <end position="58"/>
    </location>
</feature>
<organism>
    <name type="scientific">Sulfurihydrogenibium sp. (strain YO3AOP1)</name>
    <dbReference type="NCBI Taxonomy" id="436114"/>
    <lineage>
        <taxon>Bacteria</taxon>
        <taxon>Pseudomonadati</taxon>
        <taxon>Aquificota</taxon>
        <taxon>Aquificia</taxon>
        <taxon>Aquificales</taxon>
        <taxon>Hydrogenothermaceae</taxon>
        <taxon>Sulfurihydrogenibium</taxon>
    </lineage>
</organism>
<evidence type="ECO:0000255" key="1">
    <source>
        <dbReference type="HAMAP-Rule" id="MF_00340"/>
    </source>
</evidence>
<evidence type="ECO:0000305" key="2"/>